<gene>
    <name type="primary">N</name>
</gene>
<reference key="1">
    <citation type="journal article" date="1993" name="J. Gen. Virol.">
        <title>Identification of regional variants of the rabies virus within the Canadian province of Ontario.</title>
        <authorList>
            <person name="Nadin-Davis S.A."/>
            <person name="Casey G.A."/>
            <person name="Wandeler A."/>
        </authorList>
    </citation>
    <scope>NUCLEOTIDE SEQUENCE [GENOMIC RNA]</scope>
</reference>
<reference key="2">
    <citation type="submission" date="2001-02" db="EMBL/GenBank/DDBJ databases">
        <authorList>
            <person name="Nadin-Davis S.A."/>
        </authorList>
    </citation>
    <scope>SEQUENCE REVISION TO 444 AND 450</scope>
</reference>
<protein>
    <recommendedName>
        <fullName>Nucleoprotein</fullName>
        <shortName>NP</shortName>
    </recommendedName>
    <alternativeName>
        <fullName>Nucleocapsid protein</fullName>
        <shortName>Protein N</shortName>
    </alternativeName>
</protein>
<name>NCAP_RABVF</name>
<sequence>MDADKIVFKVNNQVVSLKPEIIVDQYEYKYPAIKDLKKPSITLGKAPDLNKAYKSVLSGLNAAKLDPDDVCSYLAAAMQFFEGTCPEDWTSYGILIARKGDKITPDSLVEIKRTGVEGNWALTGGMELTRDPTVPEHASLVGLLLSLYRLSKISGQNTGNYKTNIADRIEQIFETAPFIKIVEHHTLMTTHKMCANWSTIPNFRFLAGTYDMFFSRIEHLYSAIRVGTVVTAYEDCSGLVSFTGFIKQINLTAREAILYFFHKNFEEEIRRMFEPGQETAVPHSYFIHFRSLGLSGKSPYSSNAVGHVFNLIHFVGCYMGQVRSLNATVIAACAPHEMSVLGGYLGEEFFGKGTFERRFFRDEKELQEYETAELTKTDAALADDGTVNSDDEDYFSGETRSPEAVYARIMMNGGRLKRSHIRRYVSVSSNHQARPNSFAEFLNNTYSSDP</sequence>
<keyword id="KW-0167">Capsid protein</keyword>
<keyword id="KW-1139">Helical capsid protein</keyword>
<keyword id="KW-1035">Host cytoplasm</keyword>
<keyword id="KW-0597">Phosphoprotein</keyword>
<keyword id="KW-0687">Ribonucleoprotein</keyword>
<keyword id="KW-0694">RNA-binding</keyword>
<keyword id="KW-0766">Superantigen</keyword>
<keyword id="KW-0543">Viral nucleoprotein</keyword>
<keyword id="KW-0946">Virion</keyword>
<organism>
    <name type="scientific">Rabies virus (isolate Fox/Ontario/1991)</name>
    <name type="common">RABV</name>
    <dbReference type="NCBI Taxonomy" id="37132"/>
    <lineage>
        <taxon>Viruses</taxon>
        <taxon>Riboviria</taxon>
        <taxon>Orthornavirae</taxon>
        <taxon>Negarnaviricota</taxon>
        <taxon>Haploviricotina</taxon>
        <taxon>Monjiviricetes</taxon>
        <taxon>Mononegavirales</taxon>
        <taxon>Rhabdoviridae</taxon>
        <taxon>Alpharhabdovirinae</taxon>
        <taxon>Lyssavirus</taxon>
        <taxon>Lyssavirus rabies</taxon>
    </lineage>
</organism>
<comment type="function">
    <text evidence="1">Encapsidates the genome in a ratio of one protein N per nine ribonucleotides, protecting it from nucleases. If expressed without protein P it binds non-specifically RNA and therefore can bind it's own mRNA. Interaction with protein P abolishes any non-specific RNA binding, and prevents phosphorylation. The soluble N-P complex encapsidates specifically the genomic RNA, with protein N protecting the genome like a pearl necklace. The encapsidated genomic RNA is termed the nucleocapsid (NC) and serves as template for viral transcription and replication. Protein N binds protein P in the NC through a different interaction, and can be phosphorylated. Subsequent viral replication is dependent on intracellular concentration of newly synthesized protein N. During replication, encapsidation by protein N is coupled to RNA synthesis and all replicative products are resistant to nucleases (By similarity).</text>
</comment>
<comment type="subunit">
    <text evidence="1">Homomultimerizes to form the nucleocapsid. Binds to viral genomic RNA. In nucleocapsid, binds protein P and thereby positions the polymerase on the template. Protein P acts as a chaperone on free protein N to prevent it from aggregation before encapsidating genomic RNA (By similarity).</text>
</comment>
<comment type="subcellular location">
    <subcellularLocation>
        <location>Virion</location>
    </subcellularLocation>
    <subcellularLocation>
        <location evidence="1">Host cytoplasm</location>
    </subcellularLocation>
</comment>
<comment type="PTM">
    <text evidence="1">Phosphorylated by host CK2. Unphosphorylated protein N seems to have a better affinity for leader viral promoter encapsidation. Phosphorylation of protein N in ribonucleocapsid may stabilize the interaction with protein P, thereby playing an important role in viral transcription/replication (By similarity).</text>
</comment>
<comment type="miscellaneous">
    <text evidence="1">Displays a superantigen activity in human and mouse, activating mostly V-beta-8 subtypes of T-cell receptor.</text>
</comment>
<comment type="similarity">
    <text evidence="2">Belongs to the lyssavirus nucleocapsid protein family.</text>
</comment>
<accession>Q08314</accession>
<proteinExistence type="inferred from homology"/>
<dbReference type="EMBL" id="L20673">
    <property type="protein sequence ID" value="AAA03482.2"/>
    <property type="molecule type" value="Genomic_RNA"/>
</dbReference>
<dbReference type="EMBL" id="L20675">
    <property type="protein sequence ID" value="AAA03484.2"/>
    <property type="molecule type" value="Genomic_RNA"/>
</dbReference>
<dbReference type="EMBL" id="L20676">
    <property type="protein sequence ID" value="AAA03485.2"/>
    <property type="molecule type" value="Genomic_RNA"/>
</dbReference>
<dbReference type="EMBL" id="L20672">
    <property type="protein sequence ID" value="AAA92762.1"/>
    <property type="molecule type" value="Genomic_RNA"/>
</dbReference>
<dbReference type="SMR" id="Q08314"/>
<dbReference type="GO" id="GO:0019029">
    <property type="term" value="C:helical viral capsid"/>
    <property type="evidence" value="ECO:0007669"/>
    <property type="project" value="UniProtKB-KW"/>
</dbReference>
<dbReference type="GO" id="GO:0030430">
    <property type="term" value="C:host cell cytoplasm"/>
    <property type="evidence" value="ECO:0007669"/>
    <property type="project" value="UniProtKB-SubCell"/>
</dbReference>
<dbReference type="GO" id="GO:1990904">
    <property type="term" value="C:ribonucleoprotein complex"/>
    <property type="evidence" value="ECO:0007669"/>
    <property type="project" value="UniProtKB-KW"/>
</dbReference>
<dbReference type="GO" id="GO:0019013">
    <property type="term" value="C:viral nucleocapsid"/>
    <property type="evidence" value="ECO:0007669"/>
    <property type="project" value="UniProtKB-KW"/>
</dbReference>
<dbReference type="GO" id="GO:0003723">
    <property type="term" value="F:RNA binding"/>
    <property type="evidence" value="ECO:0007669"/>
    <property type="project" value="UniProtKB-KW"/>
</dbReference>
<dbReference type="Gene3D" id="1.10.3610.10">
    <property type="entry name" value="Nucleoprotein"/>
    <property type="match status" value="1"/>
</dbReference>
<dbReference type="Gene3D" id="1.10.3570.10">
    <property type="entry name" value="Rhabdovirus nucleocapsid protein like domain"/>
    <property type="match status" value="1"/>
</dbReference>
<dbReference type="InterPro" id="IPR000448">
    <property type="entry name" value="Rhabdo_ncapsid"/>
</dbReference>
<dbReference type="InterPro" id="IPR023331">
    <property type="entry name" value="Rhabdovirus_ncapsid_C"/>
</dbReference>
<dbReference type="InterPro" id="IPR023330">
    <property type="entry name" value="Rhabdovirus_ncapsid_N"/>
</dbReference>
<dbReference type="InterPro" id="IPR035961">
    <property type="entry name" value="Rhabdovirus_nucleoprotein-like"/>
</dbReference>
<dbReference type="Pfam" id="PF00945">
    <property type="entry name" value="Rhabdo_ncap"/>
    <property type="match status" value="1"/>
</dbReference>
<dbReference type="SUPFAM" id="SSF140809">
    <property type="entry name" value="Rhabdovirus nucleoprotein-like"/>
    <property type="match status" value="1"/>
</dbReference>
<evidence type="ECO:0000250" key="1"/>
<evidence type="ECO:0000305" key="2"/>
<feature type="chain" id="PRO_0000222817" description="Nucleoprotein">
    <location>
        <begin position="1"/>
        <end position="450"/>
    </location>
</feature>
<feature type="modified residue" description="Phosphoserine; by host CK2" evidence="1">
    <location>
        <position position="389"/>
    </location>
</feature>
<organismHost>
    <name type="scientific">Homo sapiens</name>
    <name type="common">Human</name>
    <dbReference type="NCBI Taxonomy" id="9606"/>
</organismHost>
<organismHost>
    <name type="scientific">Mammalia</name>
    <dbReference type="NCBI Taxonomy" id="40674"/>
</organismHost>